<dbReference type="EMBL" id="AJ235270">
    <property type="protein sequence ID" value="CAA14622.1"/>
    <property type="molecule type" value="Genomic_DNA"/>
</dbReference>
<dbReference type="PIR" id="G71725">
    <property type="entry name" value="G71725"/>
</dbReference>
<dbReference type="RefSeq" id="NP_220545.1">
    <property type="nucleotide sequence ID" value="NC_000963.1"/>
</dbReference>
<dbReference type="RefSeq" id="WP_004595870.1">
    <property type="nucleotide sequence ID" value="NC_000963.1"/>
</dbReference>
<dbReference type="SMR" id="Q9ZE08"/>
<dbReference type="STRING" id="272947.gene:17555237"/>
<dbReference type="EnsemblBacteria" id="CAA14622">
    <property type="protein sequence ID" value="CAA14622"/>
    <property type="gene ID" value="CAA14622"/>
</dbReference>
<dbReference type="GeneID" id="57569283"/>
<dbReference type="KEGG" id="rpr:RP154"/>
<dbReference type="PATRIC" id="fig|272947.5.peg.159"/>
<dbReference type="eggNOG" id="COG0233">
    <property type="taxonomic scope" value="Bacteria"/>
</dbReference>
<dbReference type="HOGENOM" id="CLU_073981_2_1_5"/>
<dbReference type="OrthoDB" id="9804006at2"/>
<dbReference type="Proteomes" id="UP000002480">
    <property type="component" value="Chromosome"/>
</dbReference>
<dbReference type="GO" id="GO:0005829">
    <property type="term" value="C:cytosol"/>
    <property type="evidence" value="ECO:0007669"/>
    <property type="project" value="GOC"/>
</dbReference>
<dbReference type="GO" id="GO:0043023">
    <property type="term" value="F:ribosomal large subunit binding"/>
    <property type="evidence" value="ECO:0007669"/>
    <property type="project" value="TreeGrafter"/>
</dbReference>
<dbReference type="GO" id="GO:0002184">
    <property type="term" value="P:cytoplasmic translational termination"/>
    <property type="evidence" value="ECO:0007669"/>
    <property type="project" value="TreeGrafter"/>
</dbReference>
<dbReference type="CDD" id="cd00520">
    <property type="entry name" value="RRF"/>
    <property type="match status" value="1"/>
</dbReference>
<dbReference type="FunFam" id="1.10.132.20:FF:000001">
    <property type="entry name" value="Ribosome-recycling factor"/>
    <property type="match status" value="1"/>
</dbReference>
<dbReference type="FunFam" id="3.30.1360.40:FF:000001">
    <property type="entry name" value="Ribosome-recycling factor"/>
    <property type="match status" value="1"/>
</dbReference>
<dbReference type="Gene3D" id="3.30.1360.40">
    <property type="match status" value="1"/>
</dbReference>
<dbReference type="Gene3D" id="1.10.132.20">
    <property type="entry name" value="Ribosome-recycling factor"/>
    <property type="match status" value="1"/>
</dbReference>
<dbReference type="HAMAP" id="MF_00040">
    <property type="entry name" value="RRF"/>
    <property type="match status" value="1"/>
</dbReference>
<dbReference type="InterPro" id="IPR002661">
    <property type="entry name" value="Ribosome_recyc_fac"/>
</dbReference>
<dbReference type="InterPro" id="IPR023584">
    <property type="entry name" value="Ribosome_recyc_fac_dom"/>
</dbReference>
<dbReference type="InterPro" id="IPR036191">
    <property type="entry name" value="RRF_sf"/>
</dbReference>
<dbReference type="NCBIfam" id="TIGR00496">
    <property type="entry name" value="frr"/>
    <property type="match status" value="1"/>
</dbReference>
<dbReference type="PANTHER" id="PTHR20982:SF3">
    <property type="entry name" value="MITOCHONDRIAL RIBOSOME RECYCLING FACTOR PSEUDO 1"/>
    <property type="match status" value="1"/>
</dbReference>
<dbReference type="PANTHER" id="PTHR20982">
    <property type="entry name" value="RIBOSOME RECYCLING FACTOR"/>
    <property type="match status" value="1"/>
</dbReference>
<dbReference type="Pfam" id="PF01765">
    <property type="entry name" value="RRF"/>
    <property type="match status" value="1"/>
</dbReference>
<dbReference type="SUPFAM" id="SSF55194">
    <property type="entry name" value="Ribosome recycling factor, RRF"/>
    <property type="match status" value="1"/>
</dbReference>
<comment type="function">
    <text evidence="1">Responsible for the release of ribosomes from messenger RNA at the termination of protein biosynthesis. May increase the efficiency of translation by recycling ribosomes from one round of translation to another.</text>
</comment>
<comment type="subcellular location">
    <subcellularLocation>
        <location evidence="1">Cytoplasm</location>
    </subcellularLocation>
</comment>
<comment type="similarity">
    <text evidence="1">Belongs to the RRF family.</text>
</comment>
<protein>
    <recommendedName>
        <fullName evidence="1">Ribosome-recycling factor</fullName>
        <shortName evidence="1">RRF</shortName>
    </recommendedName>
    <alternativeName>
        <fullName evidence="1">Ribosome-releasing factor</fullName>
    </alternativeName>
</protein>
<feature type="chain" id="PRO_0000167529" description="Ribosome-recycling factor">
    <location>
        <begin position="1"/>
        <end position="186"/>
    </location>
</feature>
<organism>
    <name type="scientific">Rickettsia prowazekii (strain Madrid E)</name>
    <dbReference type="NCBI Taxonomy" id="272947"/>
    <lineage>
        <taxon>Bacteria</taxon>
        <taxon>Pseudomonadati</taxon>
        <taxon>Pseudomonadota</taxon>
        <taxon>Alphaproteobacteria</taxon>
        <taxon>Rickettsiales</taxon>
        <taxon>Rickettsiaceae</taxon>
        <taxon>Rickettsieae</taxon>
        <taxon>Rickettsia</taxon>
        <taxon>typhus group</taxon>
    </lineage>
</organism>
<sequence length="186" mass="21044">MEKDNLKKILQEKMEKAIKVLGNELKGLRTGRASINFLDSVTVEAYGSKIPLSQVASLSTPDARTINVQVWDKSMVSSVEKGITIANLGLTHATDGQLIRLPIPSLTEERRKELVKLAHKYGEETKISLRNIRRDGIEELKKLEKDNIIVKDEYHNLSEQIQKLTDEYSSKVDSAIKQKEQEIMTV</sequence>
<accession>Q9ZE08</accession>
<gene>
    <name evidence="1" type="primary">frr</name>
    <name type="ordered locus">RP154</name>
</gene>
<proteinExistence type="inferred from homology"/>
<name>RRF_RICPR</name>
<keyword id="KW-0963">Cytoplasm</keyword>
<keyword id="KW-0648">Protein biosynthesis</keyword>
<keyword id="KW-1185">Reference proteome</keyword>
<evidence type="ECO:0000255" key="1">
    <source>
        <dbReference type="HAMAP-Rule" id="MF_00040"/>
    </source>
</evidence>
<reference key="1">
    <citation type="journal article" date="1998" name="Nature">
        <title>The genome sequence of Rickettsia prowazekii and the origin of mitochondria.</title>
        <authorList>
            <person name="Andersson S.G.E."/>
            <person name="Zomorodipour A."/>
            <person name="Andersson J.O."/>
            <person name="Sicheritz-Ponten T."/>
            <person name="Alsmark U.C.M."/>
            <person name="Podowski R.M."/>
            <person name="Naeslund A.K."/>
            <person name="Eriksson A.-S."/>
            <person name="Winkler H.H."/>
            <person name="Kurland C.G."/>
        </authorList>
    </citation>
    <scope>NUCLEOTIDE SEQUENCE [LARGE SCALE GENOMIC DNA]</scope>
    <source>
        <strain>Madrid E</strain>
    </source>
</reference>